<protein>
    <recommendedName>
        <fullName evidence="1">D-alanine--D-alanyl carrier protein ligase</fullName>
        <shortName evidence="1">DCL</shortName>
        <ecNumber evidence="1">6.2.1.54</ecNumber>
    </recommendedName>
    <alternativeName>
        <fullName evidence="1">D-alanine--poly(phosphoribitol) ligase subunit 1</fullName>
    </alternativeName>
    <alternativeName>
        <fullName evidence="1">D-alanine-activating enzyme</fullName>
        <shortName evidence="1">DAE</shortName>
    </alternativeName>
</protein>
<comment type="function">
    <text evidence="1">Catalyzes the first step in the D-alanylation of lipoteichoic acid (LTA), the activation of D-alanine and its transfer onto the D-alanyl carrier protein (Dcp) DltC. In an ATP-dependent two-step reaction, forms a high energy D-alanyl-AMP intermediate, followed by transfer of the D-alanyl residue as a thiol ester to the phosphopantheinyl prosthetic group of the Dcp. D-alanylation of LTA plays an important role in modulating the properties of the cell wall in Gram-positive bacteria, influencing the net charge of the cell wall.</text>
</comment>
<comment type="catalytic activity">
    <reaction evidence="1">
        <text>holo-[D-alanyl-carrier protein] + D-alanine + ATP = D-alanyl-[D-alanyl-carrier protein] + AMP + diphosphate</text>
        <dbReference type="Rhea" id="RHEA:55132"/>
        <dbReference type="Rhea" id="RHEA-COMP:14102"/>
        <dbReference type="Rhea" id="RHEA-COMP:14103"/>
        <dbReference type="ChEBI" id="CHEBI:30616"/>
        <dbReference type="ChEBI" id="CHEBI:33019"/>
        <dbReference type="ChEBI" id="CHEBI:57416"/>
        <dbReference type="ChEBI" id="CHEBI:64479"/>
        <dbReference type="ChEBI" id="CHEBI:138620"/>
        <dbReference type="ChEBI" id="CHEBI:456215"/>
        <dbReference type="EC" id="6.2.1.54"/>
    </reaction>
</comment>
<comment type="pathway">
    <text evidence="1">Cell wall biogenesis; lipoteichoic acid biosynthesis.</text>
</comment>
<comment type="subcellular location">
    <subcellularLocation>
        <location evidence="1">Cytoplasm</location>
    </subcellularLocation>
</comment>
<comment type="similarity">
    <text evidence="1">Belongs to the ATP-dependent AMP-binding enzyme family. DltA subfamily.</text>
</comment>
<organism>
    <name type="scientific">Staphylococcus aureus (strain MW2)</name>
    <dbReference type="NCBI Taxonomy" id="196620"/>
    <lineage>
        <taxon>Bacteria</taxon>
        <taxon>Bacillati</taxon>
        <taxon>Bacillota</taxon>
        <taxon>Bacilli</taxon>
        <taxon>Bacillales</taxon>
        <taxon>Staphylococcaceae</taxon>
        <taxon>Staphylococcus</taxon>
    </lineage>
</organism>
<proteinExistence type="inferred from homology"/>
<feature type="chain" id="PRO_0000213155" description="D-alanine--D-alanyl carrier protein ligase">
    <location>
        <begin position="1"/>
        <end position="485"/>
    </location>
</feature>
<feature type="binding site" evidence="1">
    <location>
        <begin position="144"/>
        <end position="145"/>
    </location>
    <ligand>
        <name>ATP</name>
        <dbReference type="ChEBI" id="CHEBI:30616"/>
    </ligand>
</feature>
<feature type="binding site" evidence="1">
    <location>
        <position position="189"/>
    </location>
    <ligand>
        <name>D-alanine</name>
        <dbReference type="ChEBI" id="CHEBI:57416"/>
    </ligand>
</feature>
<feature type="binding site" evidence="1">
    <location>
        <begin position="284"/>
        <end position="289"/>
    </location>
    <ligand>
        <name>ATP</name>
        <dbReference type="ChEBI" id="CHEBI:30616"/>
    </ligand>
</feature>
<feature type="binding site" evidence="1">
    <location>
        <position position="293"/>
    </location>
    <ligand>
        <name>D-alanine</name>
        <dbReference type="ChEBI" id="CHEBI:57416"/>
    </ligand>
</feature>
<feature type="binding site" evidence="1">
    <location>
        <position position="365"/>
    </location>
    <ligand>
        <name>ATP</name>
        <dbReference type="ChEBI" id="CHEBI:30616"/>
    </ligand>
</feature>
<feature type="binding site" evidence="1">
    <location>
        <position position="473"/>
    </location>
    <ligand>
        <name>ATP</name>
        <dbReference type="ChEBI" id="CHEBI:30616"/>
    </ligand>
</feature>
<feature type="binding site" evidence="1">
    <location>
        <position position="473"/>
    </location>
    <ligand>
        <name>D-alanine</name>
        <dbReference type="ChEBI" id="CHEBI:57416"/>
    </ligand>
</feature>
<evidence type="ECO:0000255" key="1">
    <source>
        <dbReference type="HAMAP-Rule" id="MF_00593"/>
    </source>
</evidence>
<name>DLTA_STAAW</name>
<dbReference type="EC" id="6.2.1.54" evidence="1"/>
<dbReference type="EMBL" id="BA000033">
    <property type="protein sequence ID" value="BAB94679.1"/>
    <property type="molecule type" value="Genomic_DNA"/>
</dbReference>
<dbReference type="RefSeq" id="WP_000129653.1">
    <property type="nucleotide sequence ID" value="NC_003923.1"/>
</dbReference>
<dbReference type="SMR" id="P68878"/>
<dbReference type="KEGG" id="sam:MW0814"/>
<dbReference type="HOGENOM" id="CLU_000022_2_12_9"/>
<dbReference type="UniPathway" id="UPA00556"/>
<dbReference type="GO" id="GO:0005737">
    <property type="term" value="C:cytoplasm"/>
    <property type="evidence" value="ECO:0007669"/>
    <property type="project" value="UniProtKB-SubCell"/>
</dbReference>
<dbReference type="GO" id="GO:0005524">
    <property type="term" value="F:ATP binding"/>
    <property type="evidence" value="ECO:0007669"/>
    <property type="project" value="UniProtKB-KW"/>
</dbReference>
<dbReference type="GO" id="GO:0047473">
    <property type="term" value="F:D-alanine [D-alanyl carrier protein] ligase activity"/>
    <property type="evidence" value="ECO:0007669"/>
    <property type="project" value="UniProtKB-UniRule"/>
</dbReference>
<dbReference type="GO" id="GO:0070395">
    <property type="term" value="P:lipoteichoic acid biosynthetic process"/>
    <property type="evidence" value="ECO:0007669"/>
    <property type="project" value="UniProtKB-UniRule"/>
</dbReference>
<dbReference type="CDD" id="cd05945">
    <property type="entry name" value="DltA"/>
    <property type="match status" value="1"/>
</dbReference>
<dbReference type="FunFam" id="3.30.300.30:FF:000012">
    <property type="entry name" value="D-alanine--D-alanyl carrier protein ligase"/>
    <property type="match status" value="1"/>
</dbReference>
<dbReference type="Gene3D" id="3.30.300.30">
    <property type="match status" value="1"/>
</dbReference>
<dbReference type="Gene3D" id="3.40.50.12780">
    <property type="entry name" value="N-terminal domain of ligase-like"/>
    <property type="match status" value="1"/>
</dbReference>
<dbReference type="HAMAP" id="MF_00593">
    <property type="entry name" value="DltA"/>
    <property type="match status" value="1"/>
</dbReference>
<dbReference type="InterPro" id="IPR010071">
    <property type="entry name" value="AA_adenyl_dom"/>
</dbReference>
<dbReference type="InterPro" id="IPR025110">
    <property type="entry name" value="AMP-bd_C"/>
</dbReference>
<dbReference type="InterPro" id="IPR045851">
    <property type="entry name" value="AMP-bd_C_sf"/>
</dbReference>
<dbReference type="InterPro" id="IPR000873">
    <property type="entry name" value="AMP-dep_synth/lig_dom"/>
</dbReference>
<dbReference type="InterPro" id="IPR042099">
    <property type="entry name" value="ANL_N_sf"/>
</dbReference>
<dbReference type="InterPro" id="IPR010072">
    <property type="entry name" value="DltA"/>
</dbReference>
<dbReference type="InterPro" id="IPR044507">
    <property type="entry name" value="DltA-like"/>
</dbReference>
<dbReference type="NCBIfam" id="TIGR01733">
    <property type="entry name" value="AA-adenyl-dom"/>
    <property type="match status" value="1"/>
</dbReference>
<dbReference type="NCBIfam" id="TIGR01734">
    <property type="entry name" value="D-ala-DACP-lig"/>
    <property type="match status" value="1"/>
</dbReference>
<dbReference type="NCBIfam" id="NF003417">
    <property type="entry name" value="PRK04813.1"/>
    <property type="match status" value="1"/>
</dbReference>
<dbReference type="PANTHER" id="PTHR45398">
    <property type="match status" value="1"/>
</dbReference>
<dbReference type="PANTHER" id="PTHR45398:SF1">
    <property type="entry name" value="ENZYME, PUTATIVE (JCVI)-RELATED"/>
    <property type="match status" value="1"/>
</dbReference>
<dbReference type="Pfam" id="PF00501">
    <property type="entry name" value="AMP-binding"/>
    <property type="match status" value="1"/>
</dbReference>
<dbReference type="Pfam" id="PF13193">
    <property type="entry name" value="AMP-binding_C"/>
    <property type="match status" value="1"/>
</dbReference>
<dbReference type="SUPFAM" id="SSF56801">
    <property type="entry name" value="Acetyl-CoA synthetase-like"/>
    <property type="match status" value="1"/>
</dbReference>
<sequence length="485" mass="54670">MTDIINKLQAFADANPQSIAVRHTTDELTYQQLMDESSKLAHRLQGSKKPMILFGHMSPYMIVGMIGAIKAGCGYVPVDTSIPEDRIKMIINKVQPEFVFNTTDESFESLEGEVFTIEDIKTSQDPVIFDSQIKDNDTVYTIFTSGSTGEPKGVQIEYASLVQFTEWMLELNKSGNEQQWLNQAPFSFDLSVMAIYPCLASGGTLNLVDKNMINKPKLLNEMLTATPINIWVSTPSFMEMCLLLPTLNEEQYGSLNEFFFCGEILPHRAAKALVNRFPSATIYNTYGPTEATVAVTSIQITQEILDQYPTLPVGVERPGARLSTTDEGELVIEGQSVSLGYLKNDQKTAEVFNFDDGIRTYHTGDKAKFENGQWFIQGRIDFQIKLNGYRMELEEIETQLRQSEFVKEAIVVPVYKNDKVIHLIGAIVPTTEVTDNAEMTKNIKNDLKSRLPEYMIPRKFEWMEQLPLTSNGKIDRKKIAEVING</sequence>
<gene>
    <name evidence="1" type="primary">dltA</name>
    <name type="ordered locus">MW0814</name>
</gene>
<reference key="1">
    <citation type="journal article" date="2002" name="Lancet">
        <title>Genome and virulence determinants of high virulence community-acquired MRSA.</title>
        <authorList>
            <person name="Baba T."/>
            <person name="Takeuchi F."/>
            <person name="Kuroda M."/>
            <person name="Yuzawa H."/>
            <person name="Aoki K."/>
            <person name="Oguchi A."/>
            <person name="Nagai Y."/>
            <person name="Iwama N."/>
            <person name="Asano K."/>
            <person name="Naimi T."/>
            <person name="Kuroda H."/>
            <person name="Cui L."/>
            <person name="Yamamoto K."/>
            <person name="Hiramatsu K."/>
        </authorList>
    </citation>
    <scope>NUCLEOTIDE SEQUENCE [LARGE SCALE GENOMIC DNA]</scope>
    <source>
        <strain>MW2</strain>
    </source>
</reference>
<keyword id="KW-0067">ATP-binding</keyword>
<keyword id="KW-0963">Cytoplasm</keyword>
<keyword id="KW-0436">Ligase</keyword>
<keyword id="KW-0547">Nucleotide-binding</keyword>
<accession>P68878</accession>
<accession>Q9S673</accession>